<protein>
    <recommendedName>
        <fullName evidence="1">Biosynthetic peptidoglycan transglycosylase</fullName>
        <ecNumber evidence="1">2.4.99.28</ecNumber>
    </recommendedName>
    <alternativeName>
        <fullName evidence="1">Glycan polymerase</fullName>
    </alternativeName>
    <alternativeName>
        <fullName evidence="1">Peptidoglycan glycosyltransferase MtgA</fullName>
        <shortName evidence="1">PGT</shortName>
    </alternativeName>
</protein>
<proteinExistence type="inferred from homology"/>
<gene>
    <name evidence="1" type="primary">mtgA</name>
    <name type="ordered locus">AZOSEA09380</name>
    <name type="ORF">ebA1739</name>
</gene>
<comment type="function">
    <text evidence="1">Peptidoglycan polymerase that catalyzes glycan chain elongation from lipid-linked precursors.</text>
</comment>
<comment type="catalytic activity">
    <reaction evidence="1">
        <text>[GlcNAc-(1-&gt;4)-Mur2Ac(oyl-L-Ala-gamma-D-Glu-L-Lys-D-Ala-D-Ala)](n)-di-trans,octa-cis-undecaprenyl diphosphate + beta-D-GlcNAc-(1-&gt;4)-Mur2Ac(oyl-L-Ala-gamma-D-Glu-L-Lys-D-Ala-D-Ala)-di-trans,octa-cis-undecaprenyl diphosphate = [GlcNAc-(1-&gt;4)-Mur2Ac(oyl-L-Ala-gamma-D-Glu-L-Lys-D-Ala-D-Ala)](n+1)-di-trans,octa-cis-undecaprenyl diphosphate + di-trans,octa-cis-undecaprenyl diphosphate + H(+)</text>
        <dbReference type="Rhea" id="RHEA:23708"/>
        <dbReference type="Rhea" id="RHEA-COMP:9602"/>
        <dbReference type="Rhea" id="RHEA-COMP:9603"/>
        <dbReference type="ChEBI" id="CHEBI:15378"/>
        <dbReference type="ChEBI" id="CHEBI:58405"/>
        <dbReference type="ChEBI" id="CHEBI:60033"/>
        <dbReference type="ChEBI" id="CHEBI:78435"/>
        <dbReference type="EC" id="2.4.99.28"/>
    </reaction>
</comment>
<comment type="pathway">
    <text evidence="1">Cell wall biogenesis; peptidoglycan biosynthesis.</text>
</comment>
<comment type="subcellular location">
    <subcellularLocation>
        <location evidence="1">Cell inner membrane</location>
        <topology evidence="1">Single-pass membrane protein</topology>
    </subcellularLocation>
</comment>
<comment type="similarity">
    <text evidence="1">Belongs to the glycosyltransferase 51 family.</text>
</comment>
<comment type="sequence caution" evidence="2">
    <conflict type="erroneous initiation">
        <sequence resource="EMBL-CDS" id="CAI07063"/>
    </conflict>
</comment>
<feature type="chain" id="PRO_0000257654" description="Biosynthetic peptidoglycan transglycosylase">
    <location>
        <begin position="1"/>
        <end position="230"/>
    </location>
</feature>
<feature type="transmembrane region" description="Helical" evidence="1">
    <location>
        <begin position="11"/>
        <end position="31"/>
    </location>
</feature>
<evidence type="ECO:0000255" key="1">
    <source>
        <dbReference type="HAMAP-Rule" id="MF_00766"/>
    </source>
</evidence>
<evidence type="ECO:0000305" key="2"/>
<dbReference type="EC" id="2.4.99.28" evidence="1"/>
<dbReference type="EMBL" id="CR555306">
    <property type="protein sequence ID" value="CAI07063.1"/>
    <property type="status" value="ALT_INIT"/>
    <property type="molecule type" value="Genomic_DNA"/>
</dbReference>
<dbReference type="RefSeq" id="WP_041645811.1">
    <property type="nucleotide sequence ID" value="NC_006513.1"/>
</dbReference>
<dbReference type="SMR" id="Q5P6J8"/>
<dbReference type="STRING" id="76114.ebA1739"/>
<dbReference type="CAZy" id="GT51">
    <property type="family name" value="Glycosyltransferase Family 51"/>
</dbReference>
<dbReference type="KEGG" id="eba:ebA1739"/>
<dbReference type="eggNOG" id="COG0744">
    <property type="taxonomic scope" value="Bacteria"/>
</dbReference>
<dbReference type="HOGENOM" id="CLU_006354_1_0_4"/>
<dbReference type="OrthoDB" id="9766909at2"/>
<dbReference type="UniPathway" id="UPA00219"/>
<dbReference type="Proteomes" id="UP000006552">
    <property type="component" value="Chromosome"/>
</dbReference>
<dbReference type="GO" id="GO:0009274">
    <property type="term" value="C:peptidoglycan-based cell wall"/>
    <property type="evidence" value="ECO:0007669"/>
    <property type="project" value="InterPro"/>
</dbReference>
<dbReference type="GO" id="GO:0005886">
    <property type="term" value="C:plasma membrane"/>
    <property type="evidence" value="ECO:0007669"/>
    <property type="project" value="UniProtKB-SubCell"/>
</dbReference>
<dbReference type="GO" id="GO:0016763">
    <property type="term" value="F:pentosyltransferase activity"/>
    <property type="evidence" value="ECO:0007669"/>
    <property type="project" value="InterPro"/>
</dbReference>
<dbReference type="GO" id="GO:0008955">
    <property type="term" value="F:peptidoglycan glycosyltransferase activity"/>
    <property type="evidence" value="ECO:0007669"/>
    <property type="project" value="UniProtKB-UniRule"/>
</dbReference>
<dbReference type="GO" id="GO:0071555">
    <property type="term" value="P:cell wall organization"/>
    <property type="evidence" value="ECO:0007669"/>
    <property type="project" value="UniProtKB-KW"/>
</dbReference>
<dbReference type="GO" id="GO:0009252">
    <property type="term" value="P:peptidoglycan biosynthetic process"/>
    <property type="evidence" value="ECO:0007669"/>
    <property type="project" value="UniProtKB-UniRule"/>
</dbReference>
<dbReference type="GO" id="GO:0008360">
    <property type="term" value="P:regulation of cell shape"/>
    <property type="evidence" value="ECO:0007669"/>
    <property type="project" value="UniProtKB-KW"/>
</dbReference>
<dbReference type="Gene3D" id="1.10.3810.10">
    <property type="entry name" value="Biosynthetic peptidoglycan transglycosylase-like"/>
    <property type="match status" value="1"/>
</dbReference>
<dbReference type="HAMAP" id="MF_00766">
    <property type="entry name" value="PGT_MtgA"/>
    <property type="match status" value="1"/>
</dbReference>
<dbReference type="InterPro" id="IPR001264">
    <property type="entry name" value="Glyco_trans_51"/>
</dbReference>
<dbReference type="InterPro" id="IPR023346">
    <property type="entry name" value="Lysozyme-like_dom_sf"/>
</dbReference>
<dbReference type="InterPro" id="IPR036950">
    <property type="entry name" value="PBP_transglycosylase"/>
</dbReference>
<dbReference type="InterPro" id="IPR011812">
    <property type="entry name" value="Pep_trsgly"/>
</dbReference>
<dbReference type="NCBIfam" id="TIGR02070">
    <property type="entry name" value="mono_pep_trsgly"/>
    <property type="match status" value="1"/>
</dbReference>
<dbReference type="PANTHER" id="PTHR30400:SF0">
    <property type="entry name" value="BIOSYNTHETIC PEPTIDOGLYCAN TRANSGLYCOSYLASE"/>
    <property type="match status" value="1"/>
</dbReference>
<dbReference type="PANTHER" id="PTHR30400">
    <property type="entry name" value="MONOFUNCTIONAL BIOSYNTHETIC PEPTIDOGLYCAN TRANSGLYCOSYLASE"/>
    <property type="match status" value="1"/>
</dbReference>
<dbReference type="Pfam" id="PF00912">
    <property type="entry name" value="Transgly"/>
    <property type="match status" value="1"/>
</dbReference>
<dbReference type="SUPFAM" id="SSF53955">
    <property type="entry name" value="Lysozyme-like"/>
    <property type="match status" value="1"/>
</dbReference>
<accession>Q5P6J8</accession>
<name>MTGA_AROAE</name>
<reference key="1">
    <citation type="journal article" date="2005" name="Arch. Microbiol.">
        <title>The genome sequence of an anaerobic aromatic-degrading denitrifying bacterium, strain EbN1.</title>
        <authorList>
            <person name="Rabus R."/>
            <person name="Kube M."/>
            <person name="Heider J."/>
            <person name="Beck A."/>
            <person name="Heitmann K."/>
            <person name="Widdel F."/>
            <person name="Reinhardt R."/>
        </authorList>
    </citation>
    <scope>NUCLEOTIDE SEQUENCE [LARGE SCALE GENOMIC DNA]</scope>
    <source>
        <strain>DSM 19018 / LMG 30748 / EbN1</strain>
    </source>
</reference>
<keyword id="KW-0997">Cell inner membrane</keyword>
<keyword id="KW-1003">Cell membrane</keyword>
<keyword id="KW-0133">Cell shape</keyword>
<keyword id="KW-0961">Cell wall biogenesis/degradation</keyword>
<keyword id="KW-0328">Glycosyltransferase</keyword>
<keyword id="KW-0472">Membrane</keyword>
<keyword id="KW-0573">Peptidoglycan synthesis</keyword>
<keyword id="KW-1185">Reference proteome</keyword>
<keyword id="KW-0808">Transferase</keyword>
<keyword id="KW-0812">Transmembrane</keyword>
<keyword id="KW-1133">Transmembrane helix</keyword>
<organism>
    <name type="scientific">Aromatoleum aromaticum (strain DSM 19018 / LMG 30748 / EbN1)</name>
    <name type="common">Azoarcus sp. (strain EbN1)</name>
    <dbReference type="NCBI Taxonomy" id="76114"/>
    <lineage>
        <taxon>Bacteria</taxon>
        <taxon>Pseudomonadati</taxon>
        <taxon>Pseudomonadota</taxon>
        <taxon>Betaproteobacteria</taxon>
        <taxon>Rhodocyclales</taxon>
        <taxon>Rhodocyclaceae</taxon>
        <taxon>Aromatoleum</taxon>
    </lineage>
</organism>
<sequence length="230" mass="26489">MKTALRGAGRVLLVLVALFVLYQLWIFTLVLWWSHFNPSSTSFMELRLDELQAKRPDVELRHEWVPYDRISIHLKRAVITAEDDTFIDHDGFDWEGMQRALEKNQRKGRAVAGGSTISQQLAKNLFLSPSKSYFRKAQEALITVMIEAVWSKRRILEVYLNVVEWGNGIFGCEAAARRYFRVAASRLGPAEAARLAVMLPNPRRYEKQFGPRLAAHARRIRSRMVYATVP</sequence>